<keyword id="KW-1015">Disulfide bond</keyword>
<keyword id="KW-0646">Protease inhibitor</keyword>
<keyword id="KW-1185">Reference proteome</keyword>
<keyword id="KW-0732">Signal</keyword>
<keyword id="KW-0789">Thiol protease inhibitor</keyword>
<dbReference type="EMBL" id="M37105">
    <property type="protein sequence ID" value="AAA29423.1"/>
    <property type="molecule type" value="mRNA"/>
</dbReference>
<dbReference type="PIR" id="A43428">
    <property type="entry name" value="A43428"/>
</dbReference>
<dbReference type="SMR" id="P22085"/>
<dbReference type="STRING" id="6282.P22085"/>
<dbReference type="MEROPS" id="I25.031"/>
<dbReference type="EnsemblMetazoa" id="OVOC7453.1">
    <property type="protein sequence ID" value="OVOC7453.1"/>
    <property type="gene ID" value="WBGene00244262"/>
</dbReference>
<dbReference type="HOGENOM" id="CLU_141818_0_0_1"/>
<dbReference type="OMA" id="ILVVPWQ"/>
<dbReference type="Proteomes" id="UP000024404">
    <property type="component" value="Unassembled WGS sequence"/>
</dbReference>
<dbReference type="GO" id="GO:0005737">
    <property type="term" value="C:cytoplasm"/>
    <property type="evidence" value="ECO:0007669"/>
    <property type="project" value="TreeGrafter"/>
</dbReference>
<dbReference type="GO" id="GO:0005615">
    <property type="term" value="C:extracellular space"/>
    <property type="evidence" value="ECO:0007669"/>
    <property type="project" value="TreeGrafter"/>
</dbReference>
<dbReference type="GO" id="GO:0031982">
    <property type="term" value="C:vesicle"/>
    <property type="evidence" value="ECO:0007669"/>
    <property type="project" value="TreeGrafter"/>
</dbReference>
<dbReference type="GO" id="GO:0004869">
    <property type="term" value="F:cysteine-type endopeptidase inhibitor activity"/>
    <property type="evidence" value="ECO:0000314"/>
    <property type="project" value="UniProtKB"/>
</dbReference>
<dbReference type="CDD" id="cd00042">
    <property type="entry name" value="CY"/>
    <property type="match status" value="1"/>
</dbReference>
<dbReference type="FunFam" id="3.10.450.10:FF:000027">
    <property type="entry name" value="Cystatin cpi-2"/>
    <property type="match status" value="1"/>
</dbReference>
<dbReference type="Gene3D" id="3.10.450.10">
    <property type="match status" value="1"/>
</dbReference>
<dbReference type="InterPro" id="IPR000010">
    <property type="entry name" value="Cystatin_dom"/>
</dbReference>
<dbReference type="InterPro" id="IPR046350">
    <property type="entry name" value="Cystatin_sf"/>
</dbReference>
<dbReference type="InterPro" id="IPR018073">
    <property type="entry name" value="Prot_inh_cystat_CS"/>
</dbReference>
<dbReference type="PANTHER" id="PTHR46186">
    <property type="entry name" value="CYSTATIN"/>
    <property type="match status" value="1"/>
</dbReference>
<dbReference type="PANTHER" id="PTHR46186:SF2">
    <property type="entry name" value="CYSTATIN"/>
    <property type="match status" value="1"/>
</dbReference>
<dbReference type="Pfam" id="PF00031">
    <property type="entry name" value="Cystatin"/>
    <property type="match status" value="1"/>
</dbReference>
<dbReference type="SMART" id="SM00043">
    <property type="entry name" value="CY"/>
    <property type="match status" value="1"/>
</dbReference>
<dbReference type="SUPFAM" id="SSF54403">
    <property type="entry name" value="Cystatin/monellin"/>
    <property type="match status" value="1"/>
</dbReference>
<dbReference type="PROSITE" id="PS00287">
    <property type="entry name" value="CYSTATIN"/>
    <property type="match status" value="1"/>
</dbReference>
<protein>
    <recommendedName>
        <fullName evidence="6">Onchocystatin</fullName>
        <shortName evidence="5">OV17</shortName>
    </recommendedName>
    <alternativeName>
        <fullName evidence="6">Cysteine proteinase inhibitor OV7</fullName>
    </alternativeName>
</protein>
<evidence type="ECO:0000255" key="1"/>
<evidence type="ECO:0000256" key="2">
    <source>
        <dbReference type="SAM" id="MobiDB-lite"/>
    </source>
</evidence>
<evidence type="ECO:0000269" key="3">
    <source>
    </source>
</evidence>
<evidence type="ECO:0000269" key="4">
    <source>
    </source>
</evidence>
<evidence type="ECO:0000303" key="5">
    <source>
    </source>
</evidence>
<evidence type="ECO:0000303" key="6">
    <source>
    </source>
</evidence>
<evidence type="ECO:0000305" key="7"/>
<evidence type="ECO:0000305" key="8">
    <source>
    </source>
</evidence>
<organism>
    <name type="scientific">Onchocerca volvulus</name>
    <dbReference type="NCBI Taxonomy" id="6282"/>
    <lineage>
        <taxon>Eukaryota</taxon>
        <taxon>Metazoa</taxon>
        <taxon>Ecdysozoa</taxon>
        <taxon>Nematoda</taxon>
        <taxon>Chromadorea</taxon>
        <taxon>Rhabditida</taxon>
        <taxon>Spirurina</taxon>
        <taxon>Spiruromorpha</taxon>
        <taxon>Filarioidea</taxon>
        <taxon>Onchocercidae</taxon>
        <taxon>Onchocerca</taxon>
    </lineage>
</organism>
<reference key="1">
    <citation type="journal article" date="1992" name="J. Biol. Chem.">
        <title>Molecular cloning and characterization of onchocystatin, a cysteine proteinase inhibitor of Onchocerca volvulus.</title>
        <authorList>
            <person name="Lustigman S."/>
            <person name="Brotman B."/>
            <person name="Huima T."/>
            <person name="Prince A.M."/>
            <person name="McKerrow J.H."/>
        </authorList>
    </citation>
    <scope>NUCLEOTIDE SEQUENCE [MRNA]</scope>
    <scope>FUNCTION</scope>
    <scope>TISSUE SPECIFICITY</scope>
    <scope>DEVELOPMENTAL STAGE</scope>
    <scope>DISULFIDE BOND</scope>
    <source>
        <strain>Savanna</strain>
    </source>
</reference>
<reference key="2">
    <citation type="journal article" date="1991" name="Mol. Biochem. Parasitol.">
        <title>Characterization of an Onchocerca volvulus cDNA clone encoding a genus specific antigen present in infective larvae and adult worms.</title>
        <authorList>
            <person name="Lustigman S."/>
            <person name="Brotman B."/>
            <person name="Huima T."/>
            <person name="Prince A.M."/>
        </authorList>
    </citation>
    <scope>NUCLEOTIDE SEQUENCE [MRNA] OF 33-162</scope>
    <source>
        <strain>Savanna</strain>
    </source>
</reference>
<reference key="3">
    <citation type="journal article" date="2003" name="Infect. Immun.">
        <title>Parasite-specific immunomodulatory functions of filarial cystatin.</title>
        <authorList>
            <person name="Schierack P.S."/>
            <person name="Lucius R."/>
            <person name="Sonnenburg B."/>
            <person name="Schilling K."/>
            <person name="Hartmann S."/>
        </authorList>
    </citation>
    <scope>FUNCTION</scope>
</reference>
<name>CYTX_ONCVO</name>
<sequence length="162" mass="18415">MLTIKDGTLLIHLLLFSVVALVQLQGAKSARAKNPSKMESKTGENQDRPVLLGGWEDRDPKDEEILELLPSILMKVNEQSNDEYHLMPIKLLKVSSQVVAGVKYKMDVQVARSQCKKSSNEKVDLTKCKKLEGHPEKVMTLEVWEKPWENFMRVEILGTKEV</sequence>
<proteinExistence type="evidence at protein level"/>
<accession>P22085</accession>
<comment type="function">
    <text evidence="3 4">Cysteine protease inhibitor which inhibits members of the peptidase C1 family (PubMed:12704112, PubMed:1512269). In the human host, inhibits CTSL/cathepsin L and CTSS/cathepsin S and to a lesser extent CTSB/cathepsin B which may cause defects in antigen processing and thereby impair antigen-driven T cell proliferation (PubMed:12704112).</text>
</comment>
<comment type="tissue specificity">
    <text evidence="4">Expressed in the cuticle of L3 and L4 larvae, female adult, and in the eggshell of developing microfilariae.</text>
</comment>
<comment type="developmental stage">
    <text evidence="4">Expressed in infective larvae (L3, L4) and adult stages.</text>
</comment>
<comment type="similarity">
    <text evidence="7">Belongs to the cystatin family.</text>
</comment>
<feature type="signal peptide" evidence="1">
    <location>
        <begin position="1"/>
        <end position="32"/>
    </location>
</feature>
<feature type="chain" id="PRO_0000006669" description="Onchocystatin">
    <location>
        <begin position="33"/>
        <end position="162"/>
    </location>
</feature>
<feature type="region of interest" description="Disordered" evidence="2">
    <location>
        <begin position="30"/>
        <end position="54"/>
    </location>
</feature>
<feature type="short sequence motif" description="Secondary area of contact" evidence="7">
    <location>
        <begin position="97"/>
        <end position="101"/>
    </location>
</feature>
<feature type="compositionally biased region" description="Basic and acidic residues" evidence="2">
    <location>
        <begin position="36"/>
        <end position="47"/>
    </location>
</feature>
<feature type="site" description="Reactive site" evidence="7">
    <location>
        <position position="53"/>
    </location>
</feature>
<feature type="disulfide bond" evidence="8">
    <location>
        <begin position="115"/>
        <end position="128"/>
    </location>
</feature>